<gene>
    <name evidence="1" type="primary">actP</name>
    <name type="ordered locus">KPN78578_44070</name>
    <name type="ORF">KPN_04476</name>
</gene>
<comment type="function">
    <text evidence="1">Transports acetate.</text>
</comment>
<comment type="subcellular location">
    <subcellularLocation>
        <location evidence="1">Cell inner membrane</location>
        <topology evidence="1">Multi-pass membrane protein</topology>
    </subcellularLocation>
</comment>
<comment type="similarity">
    <text evidence="1">Belongs to the sodium:solute symporter (SSF) (TC 2.A.21) family.</text>
</comment>
<evidence type="ECO:0000255" key="1">
    <source>
        <dbReference type="HAMAP-Rule" id="MF_01426"/>
    </source>
</evidence>
<feature type="chain" id="PRO_1000024339" description="Cation/acetate symporter ActP">
    <location>
        <begin position="1"/>
        <end position="551"/>
    </location>
</feature>
<feature type="transmembrane region" description="Helical" evidence="1">
    <location>
        <begin position="8"/>
        <end position="28"/>
    </location>
</feature>
<feature type="transmembrane region" description="Helical" evidence="1">
    <location>
        <begin position="35"/>
        <end position="55"/>
    </location>
</feature>
<feature type="transmembrane region" description="Helical" evidence="1">
    <location>
        <begin position="78"/>
        <end position="98"/>
    </location>
</feature>
<feature type="transmembrane region" description="Helical" evidence="1">
    <location>
        <begin position="105"/>
        <end position="125"/>
    </location>
</feature>
<feature type="transmembrane region" description="Helical" evidence="1">
    <location>
        <begin position="151"/>
        <end position="171"/>
    </location>
</feature>
<feature type="transmembrane region" description="Helical" evidence="1">
    <location>
        <begin position="185"/>
        <end position="205"/>
    </location>
</feature>
<feature type="transmembrane region" description="Helical" evidence="1">
    <location>
        <begin position="208"/>
        <end position="228"/>
    </location>
</feature>
<feature type="transmembrane region" description="Helical" evidence="1">
    <location>
        <begin position="264"/>
        <end position="284"/>
    </location>
</feature>
<feature type="transmembrane region" description="Helical" evidence="1">
    <location>
        <begin position="305"/>
        <end position="325"/>
    </location>
</feature>
<feature type="transmembrane region" description="Helical" evidence="1">
    <location>
        <begin position="357"/>
        <end position="377"/>
    </location>
</feature>
<feature type="transmembrane region" description="Helical" evidence="1">
    <location>
        <begin position="406"/>
        <end position="426"/>
    </location>
</feature>
<feature type="transmembrane region" description="Helical" evidence="1">
    <location>
        <begin position="430"/>
        <end position="450"/>
    </location>
</feature>
<feature type="transmembrane region" description="Helical" evidence="1">
    <location>
        <begin position="465"/>
        <end position="485"/>
    </location>
</feature>
<feature type="transmembrane region" description="Helical" evidence="1">
    <location>
        <begin position="496"/>
        <end position="516"/>
    </location>
</feature>
<reference key="1">
    <citation type="submission" date="2006-09" db="EMBL/GenBank/DDBJ databases">
        <authorList>
            <consortium name="The Klebsiella pneumonia Genome Sequencing Project"/>
            <person name="McClelland M."/>
            <person name="Sanderson E.K."/>
            <person name="Spieth J."/>
            <person name="Clifton W.S."/>
            <person name="Latreille P."/>
            <person name="Sabo A."/>
            <person name="Pepin K."/>
            <person name="Bhonagiri V."/>
            <person name="Porwollik S."/>
            <person name="Ali J."/>
            <person name="Wilson R.K."/>
        </authorList>
    </citation>
    <scope>NUCLEOTIDE SEQUENCE [LARGE SCALE GENOMIC DNA]</scope>
    <source>
        <strain>ATCC 700721 / MGH 78578</strain>
    </source>
</reference>
<proteinExistence type="inferred from homology"/>
<protein>
    <recommendedName>
        <fullName evidence="1">Cation/acetate symporter ActP</fullName>
    </recommendedName>
    <alternativeName>
        <fullName evidence="1">Acetate permease</fullName>
    </alternativeName>
    <alternativeName>
        <fullName evidence="1">Acetate transporter ActP</fullName>
    </alternativeName>
</protein>
<organism>
    <name type="scientific">Klebsiella pneumoniae subsp. pneumoniae (strain ATCC 700721 / MGH 78578)</name>
    <dbReference type="NCBI Taxonomy" id="272620"/>
    <lineage>
        <taxon>Bacteria</taxon>
        <taxon>Pseudomonadati</taxon>
        <taxon>Pseudomonadota</taxon>
        <taxon>Gammaproteobacteria</taxon>
        <taxon>Enterobacterales</taxon>
        <taxon>Enterobacteriaceae</taxon>
        <taxon>Klebsiella/Raoultella group</taxon>
        <taxon>Klebsiella</taxon>
        <taxon>Klebsiella pneumoniae complex</taxon>
    </lineage>
</organism>
<keyword id="KW-0997">Cell inner membrane</keyword>
<keyword id="KW-1003">Cell membrane</keyword>
<keyword id="KW-0406">Ion transport</keyword>
<keyword id="KW-0472">Membrane</keyword>
<keyword id="KW-0915">Sodium</keyword>
<keyword id="KW-0739">Sodium transport</keyword>
<keyword id="KW-0769">Symport</keyword>
<keyword id="KW-0812">Transmembrane</keyword>
<keyword id="KW-1133">Transmembrane helix</keyword>
<keyword id="KW-0813">Transport</keyword>
<sequence length="551" mass="59125">MIKRVLTALAATLLPLGAHAADAITGAVQRQPTNWQAIVMFLIFVALTLYITYWASKRVRSRSDYYTAGGNITGFQNGLAIAGDFMSAASFLGISALVYTSGYDGLIYSLGFLVGWPIILFLIAERLRNLGRYTFADVASYRLKQGPIRTLSACGSLVVVALYLIAQMVGAGKLIQLLFGLNYHVAVVLVGVLMVLYVLFGGMLATTWVQIIKAVLLLCGASFMAFMVMKHVGFSFNNLFTEAMAVHPKGAAIMSPGGLVKDPISALSLGLGLMFGTAGLPHILMRFFTVSDAKEARKSVFYATGFMGYFYILTFIIGFGAIMLVGANPAFKDAAGQLIGGNNMAAVHLADAVGGNLFLGFISAVAFATILAVVAGLTLAGASAVSHDLYANVFRKGATERQELKVSKITVLILGVVAILLGILFENQNIAFMVGLAFSIAASCNFPIILLSMYWSKLTTRGAMVGGWLGLLTAVILMILGPTIWVQILGHEKALFPYEYPALFSIAIAFIGIWVFSATDNSPEGMREREQFRAQFIRSQTGIGIERGQAH</sequence>
<name>ACTP_KLEP7</name>
<dbReference type="EMBL" id="CP000647">
    <property type="protein sequence ID" value="ABR79831.1"/>
    <property type="molecule type" value="Genomic_DNA"/>
</dbReference>
<dbReference type="SMR" id="A6TGZ7"/>
<dbReference type="STRING" id="272620.KPN_04476"/>
<dbReference type="PaxDb" id="272620-KPN_04476"/>
<dbReference type="EnsemblBacteria" id="ABR79831">
    <property type="protein sequence ID" value="ABR79831"/>
    <property type="gene ID" value="KPN_04476"/>
</dbReference>
<dbReference type="KEGG" id="kpn:KPN_04476"/>
<dbReference type="HOGENOM" id="CLU_018808_8_3_6"/>
<dbReference type="Proteomes" id="UP000000265">
    <property type="component" value="Chromosome"/>
</dbReference>
<dbReference type="GO" id="GO:0005886">
    <property type="term" value="C:plasma membrane"/>
    <property type="evidence" value="ECO:0007669"/>
    <property type="project" value="UniProtKB-SubCell"/>
</dbReference>
<dbReference type="GO" id="GO:0015123">
    <property type="term" value="F:acetate transmembrane transporter activity"/>
    <property type="evidence" value="ECO:0007669"/>
    <property type="project" value="UniProtKB-UniRule"/>
</dbReference>
<dbReference type="GO" id="GO:0043879">
    <property type="term" value="F:glycolate transmembrane transporter activity"/>
    <property type="evidence" value="ECO:0007669"/>
    <property type="project" value="InterPro"/>
</dbReference>
<dbReference type="GO" id="GO:0015293">
    <property type="term" value="F:symporter activity"/>
    <property type="evidence" value="ECO:0007669"/>
    <property type="project" value="UniProtKB-KW"/>
</dbReference>
<dbReference type="GO" id="GO:0006847">
    <property type="term" value="P:plasma membrane acetate transport"/>
    <property type="evidence" value="ECO:0007669"/>
    <property type="project" value="TreeGrafter"/>
</dbReference>
<dbReference type="GO" id="GO:0006814">
    <property type="term" value="P:sodium ion transport"/>
    <property type="evidence" value="ECO:0007669"/>
    <property type="project" value="UniProtKB-KW"/>
</dbReference>
<dbReference type="CDD" id="cd11480">
    <property type="entry name" value="SLC5sbd_u4"/>
    <property type="match status" value="1"/>
</dbReference>
<dbReference type="FunFam" id="1.20.1730.10:FF:000001">
    <property type="entry name" value="Cation/acetate symporter ActP"/>
    <property type="match status" value="1"/>
</dbReference>
<dbReference type="Gene3D" id="1.20.1730.10">
    <property type="entry name" value="Sodium/glucose cotransporter"/>
    <property type="match status" value="1"/>
</dbReference>
<dbReference type="HAMAP" id="MF_01426">
    <property type="entry name" value="Acet_symport_ActP"/>
    <property type="match status" value="1"/>
</dbReference>
<dbReference type="InterPro" id="IPR014083">
    <property type="entry name" value="Cation/Ac_symporter_ActP"/>
</dbReference>
<dbReference type="InterPro" id="IPR038377">
    <property type="entry name" value="Na/Glc_symporter_sf"/>
</dbReference>
<dbReference type="InterPro" id="IPR001734">
    <property type="entry name" value="Na/solute_symporter"/>
</dbReference>
<dbReference type="InterPro" id="IPR018212">
    <property type="entry name" value="Na/solute_symporter_CS"/>
</dbReference>
<dbReference type="InterPro" id="IPR050277">
    <property type="entry name" value="Sodium:Solute_Symporter"/>
</dbReference>
<dbReference type="NCBIfam" id="NF006903">
    <property type="entry name" value="PRK09395.1"/>
    <property type="match status" value="1"/>
</dbReference>
<dbReference type="NCBIfam" id="NF009135">
    <property type="entry name" value="PRK12488.1"/>
    <property type="match status" value="1"/>
</dbReference>
<dbReference type="NCBIfam" id="TIGR00813">
    <property type="entry name" value="sss"/>
    <property type="match status" value="1"/>
</dbReference>
<dbReference type="NCBIfam" id="TIGR02711">
    <property type="entry name" value="symport_actP"/>
    <property type="match status" value="1"/>
</dbReference>
<dbReference type="PANTHER" id="PTHR48086:SF6">
    <property type="entry name" value="CATION_ACETATE SYMPORTER ACTP"/>
    <property type="match status" value="1"/>
</dbReference>
<dbReference type="PANTHER" id="PTHR48086">
    <property type="entry name" value="SODIUM/PROLINE SYMPORTER-RELATED"/>
    <property type="match status" value="1"/>
</dbReference>
<dbReference type="Pfam" id="PF00474">
    <property type="entry name" value="SSF"/>
    <property type="match status" value="1"/>
</dbReference>
<dbReference type="PROSITE" id="PS00456">
    <property type="entry name" value="NA_SOLUT_SYMP_1"/>
    <property type="match status" value="1"/>
</dbReference>
<dbReference type="PROSITE" id="PS00457">
    <property type="entry name" value="NA_SOLUT_SYMP_2"/>
    <property type="match status" value="1"/>
</dbReference>
<dbReference type="PROSITE" id="PS50283">
    <property type="entry name" value="NA_SOLUT_SYMP_3"/>
    <property type="match status" value="1"/>
</dbReference>
<accession>A6TGZ7</accession>